<accession>Q5CZ51</accession>
<proteinExistence type="predicted"/>
<organism>
    <name type="scientific">Caenorhabditis elegans</name>
    <dbReference type="NCBI Taxonomy" id="6239"/>
    <lineage>
        <taxon>Eukaryota</taxon>
        <taxon>Metazoa</taxon>
        <taxon>Ecdysozoa</taxon>
        <taxon>Nematoda</taxon>
        <taxon>Chromadorea</taxon>
        <taxon>Rhabditida</taxon>
        <taxon>Rhabditina</taxon>
        <taxon>Rhabditomorpha</taxon>
        <taxon>Rhabditoidea</taxon>
        <taxon>Rhabditidae</taxon>
        <taxon>Peloderinae</taxon>
        <taxon>Caenorhabditis</taxon>
    </lineage>
</organism>
<gene>
    <name type="ORF">C07A9.12</name>
</gene>
<name>YKT2_CAEEL</name>
<dbReference type="EMBL" id="Z29094">
    <property type="protein sequence ID" value="CAI06056.1"/>
    <property type="molecule type" value="Genomic_DNA"/>
</dbReference>
<dbReference type="RefSeq" id="NP_001021155.1">
    <property type="nucleotide sequence ID" value="NM_001025984.4"/>
</dbReference>
<dbReference type="FunCoup" id="Q5CZ51">
    <property type="interactions" value="74"/>
</dbReference>
<dbReference type="PaxDb" id="6239-C07A9.12"/>
<dbReference type="EnsemblMetazoa" id="C07A9.12.1">
    <property type="protein sequence ID" value="C07A9.12.1"/>
    <property type="gene ID" value="WBGene00043994"/>
</dbReference>
<dbReference type="GeneID" id="3565951"/>
<dbReference type="KEGG" id="cel:CELE_C07A9.12"/>
<dbReference type="UCSC" id="C07A9.12">
    <property type="organism name" value="c. elegans"/>
</dbReference>
<dbReference type="AGR" id="WB:WBGene00043994"/>
<dbReference type="CTD" id="3565951"/>
<dbReference type="WormBase" id="C07A9.12">
    <property type="protein sequence ID" value="CE37746"/>
    <property type="gene ID" value="WBGene00043994"/>
</dbReference>
<dbReference type="eggNOG" id="ENOG502R6BX">
    <property type="taxonomic scope" value="Eukaryota"/>
</dbReference>
<dbReference type="GeneTree" id="ENSGT00970000195896"/>
<dbReference type="HOGENOM" id="CLU_1344377_0_0_1"/>
<dbReference type="InParanoid" id="Q5CZ51"/>
<dbReference type="OMA" id="PQDPQFG"/>
<dbReference type="OrthoDB" id="5806435at2759"/>
<dbReference type="PRO" id="PR:Q5CZ51"/>
<dbReference type="Proteomes" id="UP000001940">
    <property type="component" value="Chromosome III"/>
</dbReference>
<dbReference type="Bgee" id="WBGene00043994">
    <property type="expression patterns" value="Expressed in pharyngeal muscle cell (C elegans) and 3 other cell types or tissues"/>
</dbReference>
<dbReference type="GO" id="GO:0016020">
    <property type="term" value="C:membrane"/>
    <property type="evidence" value="ECO:0007669"/>
    <property type="project" value="UniProtKB-SubCell"/>
</dbReference>
<dbReference type="InterPro" id="IPR002619">
    <property type="entry name" value="CX"/>
</dbReference>
<dbReference type="PANTHER" id="PTHR47520">
    <property type="entry name" value="CX DOMAIN-CONTAINING PROTEIN-RELATED"/>
    <property type="match status" value="1"/>
</dbReference>
<dbReference type="PANTHER" id="PTHR47520:SF13">
    <property type="entry name" value="PROTEIN CBG10012"/>
    <property type="match status" value="1"/>
</dbReference>
<dbReference type="Pfam" id="PF01705">
    <property type="entry name" value="CX"/>
    <property type="match status" value="1"/>
</dbReference>
<evidence type="ECO:0000255" key="1"/>
<evidence type="ECO:0000305" key="2"/>
<evidence type="ECO:0000312" key="3">
    <source>
        <dbReference type="EMBL" id="CAI06056.1"/>
    </source>
</evidence>
<keyword id="KW-0472">Membrane</keyword>
<keyword id="KW-1185">Reference proteome</keyword>
<keyword id="KW-0812">Transmembrane</keyword>
<keyword id="KW-1133">Transmembrane helix</keyword>
<sequence length="235" mass="26734">MIYVSSDSFFVFWRPGSNQNILTFYRAMKLWSTWITLLILTFFCSECNAKRGGRGGGGSSAMGKHYSRSKSYFTRKYSKPGSIEHTSSFRSFVFGATSGLLMFNAGRHIIQDSSEPISFGNRKYFWGESKYVPDEELPVQCINKIDPQDPQFGKVFFDNESRPQEIVYACPADNNCCGYDCCSNSTIFTSIFSLLVILLIVSVLSIFVIECVRWCLHCTYFCKHGHGRDFEPLSI</sequence>
<comment type="subcellular location">
    <subcellularLocation>
        <location evidence="2">Membrane</location>
        <topology evidence="2">Multi-pass membrane protein</topology>
    </subcellularLocation>
</comment>
<reference evidence="2" key="1">
    <citation type="journal article" date="1994" name="Nature">
        <title>2.2 Mb of contiguous nucleotide sequence from chromosome III of C. elegans.</title>
        <authorList>
            <person name="Wilson R."/>
            <person name="Ainscough R."/>
            <person name="Anderson K."/>
            <person name="Baynes C."/>
            <person name="Berks M."/>
            <person name="Bonfield J."/>
            <person name="Burton J."/>
            <person name="Connell M."/>
            <person name="Copsey T."/>
            <person name="Cooper J."/>
            <person name="Coulson A."/>
            <person name="Craxton M."/>
            <person name="Dear S."/>
            <person name="Du Z."/>
            <person name="Durbin R."/>
            <person name="Favello A."/>
            <person name="Fraser A."/>
            <person name="Fulton L."/>
            <person name="Gardner A."/>
            <person name="Green P."/>
            <person name="Hawkins T."/>
            <person name="Hillier L."/>
            <person name="Jier M."/>
            <person name="Johnston L."/>
            <person name="Jones M."/>
            <person name="Kershaw J."/>
            <person name="Kirsten J."/>
            <person name="Laisster N."/>
            <person name="Latreille P."/>
            <person name="Lightning J."/>
            <person name="Lloyd C."/>
            <person name="Mortimore B."/>
            <person name="O'Callaghan M."/>
            <person name="Parsons J."/>
            <person name="Percy C."/>
            <person name="Rifken L."/>
            <person name="Roopra A."/>
            <person name="Saunders D."/>
            <person name="Shownkeen R."/>
            <person name="Sims M."/>
            <person name="Smaldon N."/>
            <person name="Smith A."/>
            <person name="Smith M."/>
            <person name="Sonnhammer E."/>
            <person name="Staden R."/>
            <person name="Sulston J."/>
            <person name="Thierry-Mieg J."/>
            <person name="Thomas K."/>
            <person name="Vaudin M."/>
            <person name="Vaughan K."/>
            <person name="Waterston R."/>
            <person name="Watson A."/>
            <person name="Weinstock L."/>
            <person name="Wilkinson-Sproat J."/>
            <person name="Wohldman P."/>
        </authorList>
    </citation>
    <scope>NUCLEOTIDE SEQUENCE [LARGE SCALE GENOMIC DNA]</scope>
    <source>
        <strain evidence="3">Bristol N2</strain>
    </source>
</reference>
<reference evidence="3" key="2">
    <citation type="journal article" date="1998" name="Science">
        <title>Genome sequence of the nematode C. elegans: a platform for investigating biology.</title>
        <authorList>
            <consortium name="The C. elegans sequencing consortium"/>
        </authorList>
    </citation>
    <scope>NUCLEOTIDE SEQUENCE [LARGE SCALE GENOMIC DNA]</scope>
    <source>
        <strain evidence="3">Bristol N2</strain>
    </source>
</reference>
<protein>
    <recommendedName>
        <fullName>Uncharacterized protein C07A9.12</fullName>
    </recommendedName>
</protein>
<feature type="chain" id="PRO_0000065162" description="Uncharacterized protein C07A9.12">
    <location>
        <begin position="1"/>
        <end position="235"/>
    </location>
</feature>
<feature type="transmembrane region" description="Helical" evidence="1">
    <location>
        <begin position="27"/>
        <end position="47"/>
    </location>
</feature>
<feature type="transmembrane region" description="Helical" evidence="1">
    <location>
        <begin position="187"/>
        <end position="207"/>
    </location>
</feature>
<feature type="domain" description="CX" evidence="1">
    <location>
        <begin position="124"/>
        <end position="185"/>
    </location>
</feature>